<sequence>MRVGVLTGGGDCPGLNAVIRAVVRKGIEVHGWDFVGFRNGWNGPLTGDSRPLGLNDVEDILTRGGTILRSSRTNPYKVEGGVDKIKQVLADQGVDALIAIGGEDTLGVAKRLTDDGIGVVGVPKTIDNDLGATDYTFGFDTAVSIATEAIDRLHTTAESHHRALVVEVMGRHAGWIALHSGLAGGASVILVPERHFNVDQVVSWVERRFEKEFAPIIVVAEGALPEGGEEKLLTGEKDAFGHVRLGGIGTWLADEIAHRTGKESRAVVLGHVQRGGTPTAYDRVLATRFGLNAVDAVADGDFGVMVALKGTDIVRVKLSEATAELKTVPVERYQEAEVFFG</sequence>
<gene>
    <name evidence="1" type="primary">pfp</name>
    <name type="synonym">pfk</name>
    <name type="synonym">pfkA</name>
    <name type="ordered locus">RAM_12510</name>
    <name type="ordered locus">AMES_2433</name>
</gene>
<accession>Q9AGC0</accession>
<accession>G0G7F4</accession>
<organism>
    <name type="scientific">Amycolatopsis mediterranei (strain S699)</name>
    <name type="common">Nocardia mediterranei</name>
    <dbReference type="NCBI Taxonomy" id="713604"/>
    <lineage>
        <taxon>Bacteria</taxon>
        <taxon>Bacillati</taxon>
        <taxon>Actinomycetota</taxon>
        <taxon>Actinomycetes</taxon>
        <taxon>Pseudonocardiales</taxon>
        <taxon>Pseudonocardiaceae</taxon>
        <taxon>Amycolatopsis</taxon>
    </lineage>
</organism>
<proteinExistence type="inferred from homology"/>
<reference key="1">
    <citation type="submission" date="2001-01" db="EMBL/GenBank/DDBJ databases">
        <title>Characterization and cloning of three 3-deoxy D-arabinoheptulosonate 7-phosphate synthase isoenzymes from Amycolatopsis mediterranei S699.</title>
        <authorList>
            <person name="Kuan L."/>
            <person name="Mueller M."/>
            <person name="August P.R."/>
            <person name="Pogosova-Agadjanyan E."/>
            <person name="Floss H.G."/>
            <person name="Yu T."/>
        </authorList>
    </citation>
    <scope>NUCLEOTIDE SEQUENCE [GENOMIC DNA]</scope>
    <source>
        <strain>S699</strain>
    </source>
</reference>
<reference key="2">
    <citation type="journal article" date="2011" name="J. Bacteriol.">
        <title>Whole genome sequence of the rifamycin B-producing strain Amycolatopsis mediterranei S699.</title>
        <authorList>
            <person name="Verma M."/>
            <person name="Kaur J."/>
            <person name="Kumar M."/>
            <person name="Kumari K."/>
            <person name="Saxena A."/>
            <person name="Anand S."/>
            <person name="Nigam A."/>
            <person name="Ravi V."/>
            <person name="Raghuvanshi S."/>
            <person name="Khurana P."/>
            <person name="Tyagi A.K."/>
            <person name="Khurana J.P."/>
            <person name="Lal R."/>
        </authorList>
    </citation>
    <scope>NUCLEOTIDE SEQUENCE [LARGE SCALE GENOMIC DNA]</scope>
    <source>
        <strain>S699</strain>
    </source>
</reference>
<reference key="3">
    <citation type="journal article" date="2012" name="J. Bacteriol.">
        <title>Complete genome sequence of Amycolatopsis mediterranei S699 based on de novo assembly via a combinatorial sequencing strategy.</title>
        <authorList>
            <person name="Tang B."/>
            <person name="Zhao W."/>
            <person name="Zheng H."/>
            <person name="Zhuo Y."/>
            <person name="Zhang L."/>
            <person name="Zhao G.P."/>
        </authorList>
    </citation>
    <scope>NUCLEOTIDE SEQUENCE [LARGE SCALE GENOMIC DNA]</scope>
    <source>
        <strain>S699</strain>
    </source>
</reference>
<comment type="function">
    <text evidence="1">Catalyzes the phosphorylation of D-fructose 6-phosphate, the first committing step of glycolysis. Uses inorganic phosphate (PPi) as phosphoryl donor instead of ATP like common ATP-dependent phosphofructokinases (ATP-PFKs), which renders the reaction reversible, and can thus function both in glycolysis and gluconeogenesis. Consistently, PPi-PFK can replace the enzymes of both the forward (ATP-PFK) and reverse (fructose-bisphosphatase (FBPase)) reactions.</text>
</comment>
<comment type="catalytic activity">
    <reaction evidence="1">
        <text>beta-D-fructose 6-phosphate + diphosphate = beta-D-fructose 1,6-bisphosphate + phosphate + H(+)</text>
        <dbReference type="Rhea" id="RHEA:13613"/>
        <dbReference type="ChEBI" id="CHEBI:15378"/>
        <dbReference type="ChEBI" id="CHEBI:32966"/>
        <dbReference type="ChEBI" id="CHEBI:33019"/>
        <dbReference type="ChEBI" id="CHEBI:43474"/>
        <dbReference type="ChEBI" id="CHEBI:57634"/>
        <dbReference type="EC" id="2.7.1.90"/>
    </reaction>
</comment>
<comment type="cofactor">
    <cofactor evidence="1">
        <name>Mg(2+)</name>
        <dbReference type="ChEBI" id="CHEBI:18420"/>
    </cofactor>
</comment>
<comment type="activity regulation">
    <text evidence="1">Non-allosteric.</text>
</comment>
<comment type="pathway">
    <text evidence="1">Carbohydrate degradation; glycolysis; D-glyceraldehyde 3-phosphate and glycerone phosphate from D-glucose: step 3/4.</text>
</comment>
<comment type="subunit">
    <text evidence="1">Homodimer or homotetramer.</text>
</comment>
<comment type="subcellular location">
    <subcellularLocation>
        <location evidence="1">Cytoplasm</location>
    </subcellularLocation>
</comment>
<comment type="similarity">
    <text evidence="1">Belongs to the phosphofructokinase type A (PFKA) family. Mixed-substrate PFK group III subfamily.</text>
</comment>
<feature type="chain" id="PRO_0000112010" description="Pyrophosphate--fructose 6-phosphate 1-phosphotransferase">
    <location>
        <begin position="1"/>
        <end position="341"/>
    </location>
</feature>
<feature type="active site" description="Proton acceptor" evidence="1">
    <location>
        <position position="127"/>
    </location>
</feature>
<feature type="binding site" evidence="1">
    <location>
        <position position="10"/>
    </location>
    <ligand>
        <name>diphosphate</name>
        <dbReference type="ChEBI" id="CHEBI:33019"/>
    </ligand>
</feature>
<feature type="binding site" evidence="1">
    <location>
        <position position="103"/>
    </location>
    <ligand>
        <name>Mg(2+)</name>
        <dbReference type="ChEBI" id="CHEBI:18420"/>
        <note>catalytic</note>
    </ligand>
</feature>
<feature type="binding site" description="in other chain" evidence="1">
    <location>
        <begin position="125"/>
        <end position="127"/>
    </location>
    <ligand>
        <name>substrate</name>
        <note>ligand shared between dimeric partners</note>
    </ligand>
</feature>
<feature type="binding site" evidence="1">
    <location>
        <position position="162"/>
    </location>
    <ligand>
        <name>substrate</name>
        <note>ligand shared between dimeric partners</note>
    </ligand>
</feature>
<feature type="binding site" description="in other chain" evidence="1">
    <location>
        <begin position="169"/>
        <end position="171"/>
    </location>
    <ligand>
        <name>substrate</name>
        <note>ligand shared between dimeric partners</note>
    </ligand>
</feature>
<feature type="binding site" description="in other chain" evidence="1">
    <location>
        <position position="221"/>
    </location>
    <ligand>
        <name>substrate</name>
        <note>ligand shared between dimeric partners</note>
    </ligand>
</feature>
<feature type="binding site" evidence="1">
    <location>
        <position position="265"/>
    </location>
    <ligand>
        <name>substrate</name>
        <note>ligand shared between dimeric partners</note>
    </ligand>
</feature>
<feature type="binding site" description="in other chain" evidence="1">
    <location>
        <begin position="271"/>
        <end position="274"/>
    </location>
    <ligand>
        <name>substrate</name>
        <note>ligand shared between dimeric partners</note>
    </ligand>
</feature>
<feature type="site" description="Important for catalytic activity and substrate specificity; stabilizes the transition state when the phosphoryl donor is PPi; prevents ATP from binding by mimicking the alpha-phosphate group of ATP" evidence="1">
    <location>
        <position position="104"/>
    </location>
</feature>
<feature type="site" description="Important for catalytic activity; stabilizes the transition state when the phosphoryl donor is PPi" evidence="1">
    <location>
        <position position="124"/>
    </location>
</feature>
<dbReference type="EC" id="2.7.1.90" evidence="1"/>
<dbReference type="EMBL" id="AF336847">
    <property type="protein sequence ID" value="AAK28147.1"/>
    <property type="molecule type" value="Genomic_DNA"/>
</dbReference>
<dbReference type="EMBL" id="CP002896">
    <property type="protein sequence ID" value="AEK40992.1"/>
    <property type="molecule type" value="Genomic_DNA"/>
</dbReference>
<dbReference type="EMBL" id="CP003729">
    <property type="protein sequence ID" value="AFO75969.1"/>
    <property type="molecule type" value="Genomic_DNA"/>
</dbReference>
<dbReference type="RefSeq" id="WP_013224333.1">
    <property type="nucleotide sequence ID" value="NC_018266.1"/>
</dbReference>
<dbReference type="SMR" id="Q9AGC0"/>
<dbReference type="STRING" id="713604.RAM_12510"/>
<dbReference type="GeneID" id="92870238"/>
<dbReference type="KEGG" id="amm:AMES_2433"/>
<dbReference type="KEGG" id="amn:RAM_12510"/>
<dbReference type="PATRIC" id="fig|713604.12.peg.2579"/>
<dbReference type="HOGENOM" id="CLU_020655_0_0_11"/>
<dbReference type="UniPathway" id="UPA00109">
    <property type="reaction ID" value="UER00182"/>
</dbReference>
<dbReference type="Proteomes" id="UP000006138">
    <property type="component" value="Chromosome"/>
</dbReference>
<dbReference type="GO" id="GO:0005945">
    <property type="term" value="C:6-phosphofructokinase complex"/>
    <property type="evidence" value="ECO:0007669"/>
    <property type="project" value="TreeGrafter"/>
</dbReference>
<dbReference type="GO" id="GO:0003872">
    <property type="term" value="F:6-phosphofructokinase activity"/>
    <property type="evidence" value="ECO:0007669"/>
    <property type="project" value="UniProtKB-UniRule"/>
</dbReference>
<dbReference type="GO" id="GO:0016208">
    <property type="term" value="F:AMP binding"/>
    <property type="evidence" value="ECO:0007669"/>
    <property type="project" value="TreeGrafter"/>
</dbReference>
<dbReference type="GO" id="GO:0005524">
    <property type="term" value="F:ATP binding"/>
    <property type="evidence" value="ECO:0007669"/>
    <property type="project" value="InterPro"/>
</dbReference>
<dbReference type="GO" id="GO:0047334">
    <property type="term" value="F:diphosphate-fructose-6-phosphate 1-phosphotransferase activity"/>
    <property type="evidence" value="ECO:0007669"/>
    <property type="project" value="UniProtKB-EC"/>
</dbReference>
<dbReference type="GO" id="GO:0070095">
    <property type="term" value="F:fructose-6-phosphate binding"/>
    <property type="evidence" value="ECO:0007669"/>
    <property type="project" value="TreeGrafter"/>
</dbReference>
<dbReference type="GO" id="GO:0042802">
    <property type="term" value="F:identical protein binding"/>
    <property type="evidence" value="ECO:0007669"/>
    <property type="project" value="TreeGrafter"/>
</dbReference>
<dbReference type="GO" id="GO:0046872">
    <property type="term" value="F:metal ion binding"/>
    <property type="evidence" value="ECO:0007669"/>
    <property type="project" value="UniProtKB-KW"/>
</dbReference>
<dbReference type="GO" id="GO:0048029">
    <property type="term" value="F:monosaccharide binding"/>
    <property type="evidence" value="ECO:0007669"/>
    <property type="project" value="TreeGrafter"/>
</dbReference>
<dbReference type="GO" id="GO:0061621">
    <property type="term" value="P:canonical glycolysis"/>
    <property type="evidence" value="ECO:0007669"/>
    <property type="project" value="TreeGrafter"/>
</dbReference>
<dbReference type="GO" id="GO:0030388">
    <property type="term" value="P:fructose 1,6-bisphosphate metabolic process"/>
    <property type="evidence" value="ECO:0007669"/>
    <property type="project" value="TreeGrafter"/>
</dbReference>
<dbReference type="GO" id="GO:0006002">
    <property type="term" value="P:fructose 6-phosphate metabolic process"/>
    <property type="evidence" value="ECO:0007669"/>
    <property type="project" value="InterPro"/>
</dbReference>
<dbReference type="Gene3D" id="3.40.50.450">
    <property type="match status" value="1"/>
</dbReference>
<dbReference type="Gene3D" id="3.40.50.460">
    <property type="entry name" value="Phosphofructokinase domain"/>
    <property type="match status" value="1"/>
</dbReference>
<dbReference type="HAMAP" id="MF_01976">
    <property type="entry name" value="Phosphofructokinase_III"/>
    <property type="match status" value="1"/>
</dbReference>
<dbReference type="InterPro" id="IPR022953">
    <property type="entry name" value="ATP_PFK"/>
</dbReference>
<dbReference type="InterPro" id="IPR012003">
    <property type="entry name" value="ATP_PFK_prok-type"/>
</dbReference>
<dbReference type="InterPro" id="IPR015912">
    <property type="entry name" value="Phosphofructokinase_CS"/>
</dbReference>
<dbReference type="InterPro" id="IPR000023">
    <property type="entry name" value="Phosphofructokinase_dom"/>
</dbReference>
<dbReference type="InterPro" id="IPR012829">
    <property type="entry name" value="Phosphofructokinase_III"/>
</dbReference>
<dbReference type="InterPro" id="IPR035966">
    <property type="entry name" value="PKF_sf"/>
</dbReference>
<dbReference type="NCBIfam" id="TIGR02483">
    <property type="entry name" value="PFK_mixed"/>
    <property type="match status" value="1"/>
</dbReference>
<dbReference type="NCBIfam" id="NF002872">
    <property type="entry name" value="PRK03202.1"/>
    <property type="match status" value="1"/>
</dbReference>
<dbReference type="PANTHER" id="PTHR13697:SF52">
    <property type="entry name" value="ATP-DEPENDENT 6-PHOSPHOFRUCTOKINASE 3"/>
    <property type="match status" value="1"/>
</dbReference>
<dbReference type="PANTHER" id="PTHR13697">
    <property type="entry name" value="PHOSPHOFRUCTOKINASE"/>
    <property type="match status" value="1"/>
</dbReference>
<dbReference type="Pfam" id="PF00365">
    <property type="entry name" value="PFK"/>
    <property type="match status" value="1"/>
</dbReference>
<dbReference type="PIRSF" id="PIRSF000532">
    <property type="entry name" value="ATP_PFK_prok"/>
    <property type="match status" value="1"/>
</dbReference>
<dbReference type="PRINTS" id="PR00476">
    <property type="entry name" value="PHFRCTKINASE"/>
</dbReference>
<dbReference type="SUPFAM" id="SSF53784">
    <property type="entry name" value="Phosphofructokinase"/>
    <property type="match status" value="1"/>
</dbReference>
<dbReference type="PROSITE" id="PS00433">
    <property type="entry name" value="PHOSPHOFRUCTOKINASE"/>
    <property type="match status" value="1"/>
</dbReference>
<keyword id="KW-0963">Cytoplasm</keyword>
<keyword id="KW-0324">Glycolysis</keyword>
<keyword id="KW-0418">Kinase</keyword>
<keyword id="KW-0460">Magnesium</keyword>
<keyword id="KW-0479">Metal-binding</keyword>
<keyword id="KW-0808">Transferase</keyword>
<name>PFP_AMYMS</name>
<protein>
    <recommendedName>
        <fullName evidence="1">Pyrophosphate--fructose 6-phosphate 1-phosphotransferase</fullName>
        <ecNumber evidence="1">2.7.1.90</ecNumber>
    </recommendedName>
    <alternativeName>
        <fullName evidence="1">6-phosphofructokinase, pyrophosphate dependent</fullName>
    </alternativeName>
    <alternativeName>
        <fullName evidence="1">PPi-dependent phosphofructokinase</fullName>
        <shortName evidence="1">PPi-PFK</shortName>
    </alternativeName>
    <alternativeName>
        <fullName evidence="1">Pyrophosphate-dependent 6-phosphofructose-1-kinase</fullName>
    </alternativeName>
</protein>
<evidence type="ECO:0000255" key="1">
    <source>
        <dbReference type="HAMAP-Rule" id="MF_01976"/>
    </source>
</evidence>